<name>ARGD_RHILO</name>
<proteinExistence type="inferred from homology"/>
<evidence type="ECO:0000255" key="1">
    <source>
        <dbReference type="HAMAP-Rule" id="MF_01107"/>
    </source>
</evidence>
<feature type="chain" id="PRO_0000112773" description="Acetylornithine aminotransferase">
    <location>
        <begin position="1"/>
        <end position="399"/>
    </location>
</feature>
<feature type="binding site" evidence="1">
    <location>
        <begin position="97"/>
        <end position="98"/>
    </location>
    <ligand>
        <name>pyridoxal 5'-phosphate</name>
        <dbReference type="ChEBI" id="CHEBI:597326"/>
    </ligand>
</feature>
<feature type="binding site" evidence="1">
    <location>
        <position position="130"/>
    </location>
    <ligand>
        <name>pyridoxal 5'-phosphate</name>
        <dbReference type="ChEBI" id="CHEBI:597326"/>
    </ligand>
</feature>
<feature type="binding site" evidence="1">
    <location>
        <position position="133"/>
    </location>
    <ligand>
        <name>N(2)-acetyl-L-ornithine</name>
        <dbReference type="ChEBI" id="CHEBI:57805"/>
    </ligand>
</feature>
<feature type="binding site" evidence="1">
    <location>
        <begin position="215"/>
        <end position="218"/>
    </location>
    <ligand>
        <name>pyridoxal 5'-phosphate</name>
        <dbReference type="ChEBI" id="CHEBI:597326"/>
    </ligand>
</feature>
<feature type="binding site" evidence="1">
    <location>
        <position position="272"/>
    </location>
    <ligand>
        <name>N(2)-acetyl-L-ornithine</name>
        <dbReference type="ChEBI" id="CHEBI:57805"/>
    </ligand>
</feature>
<feature type="binding site" evidence="1">
    <location>
        <position position="273"/>
    </location>
    <ligand>
        <name>pyridoxal 5'-phosphate</name>
        <dbReference type="ChEBI" id="CHEBI:597326"/>
    </ligand>
</feature>
<feature type="modified residue" description="N6-(pyridoxal phosphate)lysine" evidence="1">
    <location>
        <position position="244"/>
    </location>
</feature>
<gene>
    <name evidence="1" type="primary">argD</name>
    <name type="ordered locus">mlr5646</name>
</gene>
<protein>
    <recommendedName>
        <fullName evidence="1">Acetylornithine aminotransferase</fullName>
        <shortName evidence="1">ACOAT</shortName>
        <ecNumber evidence="1">2.6.1.11</ecNumber>
    </recommendedName>
</protein>
<accession>Q98BB7</accession>
<reference key="1">
    <citation type="journal article" date="2000" name="DNA Res.">
        <title>Complete genome structure of the nitrogen-fixing symbiotic bacterium Mesorhizobium loti.</title>
        <authorList>
            <person name="Kaneko T."/>
            <person name="Nakamura Y."/>
            <person name="Sato S."/>
            <person name="Asamizu E."/>
            <person name="Kato T."/>
            <person name="Sasamoto S."/>
            <person name="Watanabe A."/>
            <person name="Idesawa K."/>
            <person name="Ishikawa A."/>
            <person name="Kawashima K."/>
            <person name="Kimura T."/>
            <person name="Kishida Y."/>
            <person name="Kiyokawa C."/>
            <person name="Kohara M."/>
            <person name="Matsumoto M."/>
            <person name="Matsuno A."/>
            <person name="Mochizuki Y."/>
            <person name="Nakayama S."/>
            <person name="Nakazaki N."/>
            <person name="Shimpo S."/>
            <person name="Sugimoto M."/>
            <person name="Takeuchi C."/>
            <person name="Yamada M."/>
            <person name="Tabata S."/>
        </authorList>
    </citation>
    <scope>NUCLEOTIDE SEQUENCE [LARGE SCALE GENOMIC DNA]</scope>
    <source>
        <strain>LMG 29417 / CECT 9101 / MAFF 303099</strain>
    </source>
</reference>
<organism>
    <name type="scientific">Mesorhizobium japonicum (strain LMG 29417 / CECT 9101 / MAFF 303099)</name>
    <name type="common">Mesorhizobium loti (strain MAFF 303099)</name>
    <dbReference type="NCBI Taxonomy" id="266835"/>
    <lineage>
        <taxon>Bacteria</taxon>
        <taxon>Pseudomonadati</taxon>
        <taxon>Pseudomonadota</taxon>
        <taxon>Alphaproteobacteria</taxon>
        <taxon>Hyphomicrobiales</taxon>
        <taxon>Phyllobacteriaceae</taxon>
        <taxon>Mesorhizobium</taxon>
    </lineage>
</organism>
<comment type="catalytic activity">
    <reaction evidence="1">
        <text>N(2)-acetyl-L-ornithine + 2-oxoglutarate = N-acetyl-L-glutamate 5-semialdehyde + L-glutamate</text>
        <dbReference type="Rhea" id="RHEA:18049"/>
        <dbReference type="ChEBI" id="CHEBI:16810"/>
        <dbReference type="ChEBI" id="CHEBI:29123"/>
        <dbReference type="ChEBI" id="CHEBI:29985"/>
        <dbReference type="ChEBI" id="CHEBI:57805"/>
        <dbReference type="EC" id="2.6.1.11"/>
    </reaction>
</comment>
<comment type="cofactor">
    <cofactor evidence="1">
        <name>pyridoxal 5'-phosphate</name>
        <dbReference type="ChEBI" id="CHEBI:597326"/>
    </cofactor>
    <text evidence="1">Binds 1 pyridoxal phosphate per subunit.</text>
</comment>
<comment type="pathway">
    <text evidence="1">Amino-acid biosynthesis; L-arginine biosynthesis; N(2)-acetyl-L-ornithine from L-glutamate: step 4/4.</text>
</comment>
<comment type="subunit">
    <text evidence="1">Homodimer.</text>
</comment>
<comment type="subcellular location">
    <subcellularLocation>
        <location evidence="1">Cytoplasm</location>
    </subcellularLocation>
</comment>
<comment type="miscellaneous">
    <text evidence="1">May also have succinyldiaminopimelate aminotransferase activity, thus carrying out the corresponding step in lysine biosynthesis.</text>
</comment>
<comment type="similarity">
    <text evidence="1">Belongs to the class-III pyridoxal-phosphate-dependent aminotransferase family. ArgD subfamily.</text>
</comment>
<dbReference type="EC" id="2.6.1.11" evidence="1"/>
<dbReference type="EMBL" id="BA000012">
    <property type="protein sequence ID" value="BAB52055.1"/>
    <property type="molecule type" value="Genomic_DNA"/>
</dbReference>
<dbReference type="RefSeq" id="WP_010913393.1">
    <property type="nucleotide sequence ID" value="NC_002678.2"/>
</dbReference>
<dbReference type="SMR" id="Q98BB7"/>
<dbReference type="KEGG" id="mlo:mlr5646"/>
<dbReference type="PATRIC" id="fig|266835.9.peg.4487"/>
<dbReference type="eggNOG" id="COG4992">
    <property type="taxonomic scope" value="Bacteria"/>
</dbReference>
<dbReference type="HOGENOM" id="CLU_016922_10_1_5"/>
<dbReference type="UniPathway" id="UPA00068">
    <property type="reaction ID" value="UER00109"/>
</dbReference>
<dbReference type="Proteomes" id="UP000000552">
    <property type="component" value="Chromosome"/>
</dbReference>
<dbReference type="GO" id="GO:0005737">
    <property type="term" value="C:cytoplasm"/>
    <property type="evidence" value="ECO:0007669"/>
    <property type="project" value="UniProtKB-SubCell"/>
</dbReference>
<dbReference type="GO" id="GO:0042802">
    <property type="term" value="F:identical protein binding"/>
    <property type="evidence" value="ECO:0007669"/>
    <property type="project" value="TreeGrafter"/>
</dbReference>
<dbReference type="GO" id="GO:0003992">
    <property type="term" value="F:N2-acetyl-L-ornithine:2-oxoglutarate 5-aminotransferase activity"/>
    <property type="evidence" value="ECO:0007669"/>
    <property type="project" value="UniProtKB-UniRule"/>
</dbReference>
<dbReference type="GO" id="GO:0030170">
    <property type="term" value="F:pyridoxal phosphate binding"/>
    <property type="evidence" value="ECO:0007669"/>
    <property type="project" value="InterPro"/>
</dbReference>
<dbReference type="GO" id="GO:0006526">
    <property type="term" value="P:L-arginine biosynthetic process"/>
    <property type="evidence" value="ECO:0007669"/>
    <property type="project" value="UniProtKB-UniRule"/>
</dbReference>
<dbReference type="CDD" id="cd00610">
    <property type="entry name" value="OAT_like"/>
    <property type="match status" value="1"/>
</dbReference>
<dbReference type="FunFam" id="3.40.640.10:FF:000004">
    <property type="entry name" value="Acetylornithine aminotransferase"/>
    <property type="match status" value="1"/>
</dbReference>
<dbReference type="Gene3D" id="3.90.1150.10">
    <property type="entry name" value="Aspartate Aminotransferase, domain 1"/>
    <property type="match status" value="1"/>
</dbReference>
<dbReference type="Gene3D" id="3.40.640.10">
    <property type="entry name" value="Type I PLP-dependent aspartate aminotransferase-like (Major domain)"/>
    <property type="match status" value="1"/>
</dbReference>
<dbReference type="HAMAP" id="MF_01107">
    <property type="entry name" value="ArgD_aminotrans_3"/>
    <property type="match status" value="1"/>
</dbReference>
<dbReference type="InterPro" id="IPR004636">
    <property type="entry name" value="AcOrn/SuccOrn_fam"/>
</dbReference>
<dbReference type="InterPro" id="IPR005814">
    <property type="entry name" value="Aminotrans_3"/>
</dbReference>
<dbReference type="InterPro" id="IPR049704">
    <property type="entry name" value="Aminotrans_3_PPA_site"/>
</dbReference>
<dbReference type="InterPro" id="IPR050103">
    <property type="entry name" value="Class-III_PLP-dep_AT"/>
</dbReference>
<dbReference type="InterPro" id="IPR015424">
    <property type="entry name" value="PyrdxlP-dep_Trfase"/>
</dbReference>
<dbReference type="InterPro" id="IPR015421">
    <property type="entry name" value="PyrdxlP-dep_Trfase_major"/>
</dbReference>
<dbReference type="InterPro" id="IPR015422">
    <property type="entry name" value="PyrdxlP-dep_Trfase_small"/>
</dbReference>
<dbReference type="NCBIfam" id="TIGR00707">
    <property type="entry name" value="argD"/>
    <property type="match status" value="1"/>
</dbReference>
<dbReference type="NCBIfam" id="NF002325">
    <property type="entry name" value="PRK01278.1"/>
    <property type="match status" value="1"/>
</dbReference>
<dbReference type="PANTHER" id="PTHR11986">
    <property type="entry name" value="AMINOTRANSFERASE CLASS III"/>
    <property type="match status" value="1"/>
</dbReference>
<dbReference type="PANTHER" id="PTHR11986:SF113">
    <property type="entry name" value="SUCCINYLORNITHINE TRANSAMINASE"/>
    <property type="match status" value="1"/>
</dbReference>
<dbReference type="Pfam" id="PF00202">
    <property type="entry name" value="Aminotran_3"/>
    <property type="match status" value="1"/>
</dbReference>
<dbReference type="PIRSF" id="PIRSF000521">
    <property type="entry name" value="Transaminase_4ab_Lys_Orn"/>
    <property type="match status" value="1"/>
</dbReference>
<dbReference type="SUPFAM" id="SSF53383">
    <property type="entry name" value="PLP-dependent transferases"/>
    <property type="match status" value="1"/>
</dbReference>
<dbReference type="PROSITE" id="PS00600">
    <property type="entry name" value="AA_TRANSFER_CLASS_3"/>
    <property type="match status" value="1"/>
</dbReference>
<keyword id="KW-0028">Amino-acid biosynthesis</keyword>
<keyword id="KW-0032">Aminotransferase</keyword>
<keyword id="KW-0055">Arginine biosynthesis</keyword>
<keyword id="KW-0963">Cytoplasm</keyword>
<keyword id="KW-0663">Pyridoxal phosphate</keyword>
<keyword id="KW-0808">Transferase</keyword>
<sequence length="399" mass="42417">MSGSALYETFARAPLAFDHGEGTWLVTDKGERYLDFAGGIAVNSLGHSHPHLVAALTEQAAKLWHVSNLYEIPGQSRLGQRLVDATFADKVFFTNSGAEALECAIKTARRYHFVKGHPERFRVITFEGAFHGRTLATIAAGGQYKYLEGFGPKVEGFDQVGFDDIDAAEKAITPETAAILIEPVQGEGGIRPVPTQSLKRLRQLCDQHGLLLIYDEVQCGIGRTGKLFAHEWSGVAPDIMAIAKGIGGGFPMGACLATDEAAVGMTAGVHGTTFGGNPLAMAVGNAVLDVVLEDGFLEDVQRKALLMKQGLAAIADEFPDVVEDIRGTGLMLGLKCAMPNTKVNMALRDQHLLAVPAGDNVIRLLPPLTVTDAEIHEALNRIRAGAKGLADAIAVAAAK</sequence>